<comment type="function">
    <text evidence="1">Catalyzes the 1,3-allylic rearrangement of the homoallylic substrate isopentenyl (IPP) to its highly electrophilic allylic isomer, dimethylallyl diphosphate (DMAPP).</text>
</comment>
<comment type="catalytic activity">
    <reaction evidence="1">
        <text>isopentenyl diphosphate = dimethylallyl diphosphate</text>
        <dbReference type="Rhea" id="RHEA:23284"/>
        <dbReference type="ChEBI" id="CHEBI:57623"/>
        <dbReference type="ChEBI" id="CHEBI:128769"/>
        <dbReference type="EC" id="5.3.3.2"/>
    </reaction>
</comment>
<comment type="cofactor">
    <cofactor evidence="1">
        <name>Mg(2+)</name>
        <dbReference type="ChEBI" id="CHEBI:18420"/>
    </cofactor>
    <text evidence="1">Binds 1 Mg(2+) ion per subunit. The magnesium ion binds only when substrate is bound.</text>
</comment>
<comment type="cofactor">
    <cofactor evidence="1">
        <name>Mn(2+)</name>
        <dbReference type="ChEBI" id="CHEBI:29035"/>
    </cofactor>
    <text evidence="1">Binds 1 Mn(2+) ion per subunit.</text>
</comment>
<comment type="pathway">
    <text evidence="1">Isoprenoid biosynthesis; dimethylallyl diphosphate biosynthesis; dimethylallyl diphosphate from isopentenyl diphosphate: step 1/1.</text>
</comment>
<comment type="subunit">
    <text evidence="1">Homodimer.</text>
</comment>
<comment type="subcellular location">
    <subcellularLocation>
        <location evidence="1">Cytoplasm</location>
    </subcellularLocation>
</comment>
<comment type="similarity">
    <text evidence="1">Belongs to the IPP isomerase type 1 family.</text>
</comment>
<protein>
    <recommendedName>
        <fullName evidence="1">Isopentenyl-diphosphate Delta-isomerase</fullName>
        <shortName evidence="1">IPP isomerase</shortName>
        <ecNumber evidence="1">5.3.3.2</ecNumber>
    </recommendedName>
    <alternativeName>
        <fullName evidence="1">IPP:DMAPP isomerase</fullName>
    </alternativeName>
    <alternativeName>
        <fullName evidence="1">Isopentenyl pyrophosphate isomerase</fullName>
    </alternativeName>
</protein>
<sequence>MQTEHVILLNAQGVPTGTLEKYAAHTADTLLHLAFSSWLFNAKGQLLVTRRALSKKAWPGVWTNSVCGHPQLGESSEDAVIRRCRYELGVEITPPESIYPDFRYRATDPRGIVENEVCPVFAARTTSALQINDDEVMDYQWCDLADVLRGIDATPWAFSPWMVMQATNREARIRLSAFTQLK</sequence>
<organism>
    <name type="scientific">Shigella flexneri</name>
    <dbReference type="NCBI Taxonomy" id="623"/>
    <lineage>
        <taxon>Bacteria</taxon>
        <taxon>Pseudomonadati</taxon>
        <taxon>Pseudomonadota</taxon>
        <taxon>Gammaproteobacteria</taxon>
        <taxon>Enterobacterales</taxon>
        <taxon>Enterobacteriaceae</taxon>
        <taxon>Shigella</taxon>
    </lineage>
</organism>
<reference key="1">
    <citation type="journal article" date="2002" name="Nucleic Acids Res.">
        <title>Genome sequence of Shigella flexneri 2a: insights into pathogenicity through comparison with genomes of Escherichia coli K12 and O157.</title>
        <authorList>
            <person name="Jin Q."/>
            <person name="Yuan Z."/>
            <person name="Xu J."/>
            <person name="Wang Y."/>
            <person name="Shen Y."/>
            <person name="Lu W."/>
            <person name="Wang J."/>
            <person name="Liu H."/>
            <person name="Yang J."/>
            <person name="Yang F."/>
            <person name="Zhang X."/>
            <person name="Zhang J."/>
            <person name="Yang G."/>
            <person name="Wu H."/>
            <person name="Qu D."/>
            <person name="Dong J."/>
            <person name="Sun L."/>
            <person name="Xue Y."/>
            <person name="Zhao A."/>
            <person name="Gao Y."/>
            <person name="Zhu J."/>
            <person name="Kan B."/>
            <person name="Ding K."/>
            <person name="Chen S."/>
            <person name="Cheng H."/>
            <person name="Yao Z."/>
            <person name="He B."/>
            <person name="Chen R."/>
            <person name="Ma D."/>
            <person name="Qiang B."/>
            <person name="Wen Y."/>
            <person name="Hou Y."/>
            <person name="Yu J."/>
        </authorList>
    </citation>
    <scope>NUCLEOTIDE SEQUENCE [LARGE SCALE GENOMIC DNA]</scope>
    <source>
        <strain>301 / Serotype 2a</strain>
    </source>
</reference>
<reference key="2">
    <citation type="journal article" date="2003" name="Infect. Immun.">
        <title>Complete genome sequence and comparative genomics of Shigella flexneri serotype 2a strain 2457T.</title>
        <authorList>
            <person name="Wei J."/>
            <person name="Goldberg M.B."/>
            <person name="Burland V."/>
            <person name="Venkatesan M.M."/>
            <person name="Deng W."/>
            <person name="Fournier G."/>
            <person name="Mayhew G.F."/>
            <person name="Plunkett G. III"/>
            <person name="Rose D.J."/>
            <person name="Darling A."/>
            <person name="Mau B."/>
            <person name="Perna N.T."/>
            <person name="Payne S.M."/>
            <person name="Runyen-Janecky L.J."/>
            <person name="Zhou S."/>
            <person name="Schwartz D.C."/>
            <person name="Blattner F.R."/>
        </authorList>
    </citation>
    <scope>NUCLEOTIDE SEQUENCE [LARGE SCALE GENOMIC DNA]</scope>
    <source>
        <strain>ATCC 700930 / 2457T / Serotype 2a</strain>
    </source>
</reference>
<proteinExistence type="inferred from homology"/>
<name>IDI_SHIFL</name>
<feature type="chain" id="PRO_0000205266" description="Isopentenyl-diphosphate Delta-isomerase">
    <location>
        <begin position="1"/>
        <end position="182"/>
    </location>
</feature>
<feature type="domain" description="Nudix hydrolase">
    <location>
        <begin position="30"/>
        <end position="164"/>
    </location>
</feature>
<feature type="active site" evidence="1">
    <location>
        <position position="67"/>
    </location>
</feature>
<feature type="active site" evidence="1">
    <location>
        <position position="116"/>
    </location>
</feature>
<feature type="binding site" evidence="1">
    <location>
        <position position="25"/>
    </location>
    <ligand>
        <name>Mn(2+)</name>
        <dbReference type="ChEBI" id="CHEBI:29035"/>
    </ligand>
</feature>
<feature type="binding site" evidence="1">
    <location>
        <position position="32"/>
    </location>
    <ligand>
        <name>Mn(2+)</name>
        <dbReference type="ChEBI" id="CHEBI:29035"/>
    </ligand>
</feature>
<feature type="binding site" evidence="1">
    <location>
        <position position="67"/>
    </location>
    <ligand>
        <name>Mg(2+)</name>
        <dbReference type="ChEBI" id="CHEBI:18420"/>
    </ligand>
</feature>
<feature type="binding site" evidence="1">
    <location>
        <position position="69"/>
    </location>
    <ligand>
        <name>Mn(2+)</name>
        <dbReference type="ChEBI" id="CHEBI:29035"/>
    </ligand>
</feature>
<feature type="binding site" evidence="1">
    <location>
        <position position="87"/>
    </location>
    <ligand>
        <name>Mg(2+)</name>
        <dbReference type="ChEBI" id="CHEBI:18420"/>
    </ligand>
</feature>
<feature type="binding site" evidence="1">
    <location>
        <position position="114"/>
    </location>
    <ligand>
        <name>Mn(2+)</name>
        <dbReference type="ChEBI" id="CHEBI:29035"/>
    </ligand>
</feature>
<feature type="binding site" evidence="1">
    <location>
        <position position="116"/>
    </location>
    <ligand>
        <name>Mn(2+)</name>
        <dbReference type="ChEBI" id="CHEBI:29035"/>
    </ligand>
</feature>
<evidence type="ECO:0000255" key="1">
    <source>
        <dbReference type="HAMAP-Rule" id="MF_00202"/>
    </source>
</evidence>
<accession>Q83MJ9</accession>
<gene>
    <name evidence="1" type="primary">idi</name>
    <name type="ordered locus">SF2875</name>
    <name type="ordered locus">S3074</name>
</gene>
<keyword id="KW-0963">Cytoplasm</keyword>
<keyword id="KW-0413">Isomerase</keyword>
<keyword id="KW-0414">Isoprene biosynthesis</keyword>
<keyword id="KW-0460">Magnesium</keyword>
<keyword id="KW-0464">Manganese</keyword>
<keyword id="KW-0479">Metal-binding</keyword>
<keyword id="KW-1185">Reference proteome</keyword>
<dbReference type="EC" id="5.3.3.2" evidence="1"/>
<dbReference type="EMBL" id="AE005674">
    <property type="protein sequence ID" value="AAN44361.1"/>
    <property type="molecule type" value="Genomic_DNA"/>
</dbReference>
<dbReference type="EMBL" id="AE014073">
    <property type="protein sequence ID" value="AAP18182.1"/>
    <property type="molecule type" value="Genomic_DNA"/>
</dbReference>
<dbReference type="RefSeq" id="NP_708654.1">
    <property type="nucleotide sequence ID" value="NC_004337.2"/>
</dbReference>
<dbReference type="RefSeq" id="WP_001192802.1">
    <property type="nucleotide sequence ID" value="NZ_WPGW01000018.1"/>
</dbReference>
<dbReference type="SMR" id="Q83MJ9"/>
<dbReference type="STRING" id="198214.SF2875"/>
<dbReference type="PaxDb" id="198214-SF2875"/>
<dbReference type="GeneID" id="1025913"/>
<dbReference type="KEGG" id="sfl:SF2875"/>
<dbReference type="KEGG" id="sfx:S3074"/>
<dbReference type="PATRIC" id="fig|198214.7.peg.3421"/>
<dbReference type="HOGENOM" id="CLU_060552_2_0_6"/>
<dbReference type="UniPathway" id="UPA00059">
    <property type="reaction ID" value="UER00104"/>
</dbReference>
<dbReference type="Proteomes" id="UP000001006">
    <property type="component" value="Chromosome"/>
</dbReference>
<dbReference type="Proteomes" id="UP000002673">
    <property type="component" value="Chromosome"/>
</dbReference>
<dbReference type="GO" id="GO:0005737">
    <property type="term" value="C:cytoplasm"/>
    <property type="evidence" value="ECO:0007669"/>
    <property type="project" value="UniProtKB-SubCell"/>
</dbReference>
<dbReference type="GO" id="GO:0004452">
    <property type="term" value="F:isopentenyl-diphosphate delta-isomerase activity"/>
    <property type="evidence" value="ECO:0007669"/>
    <property type="project" value="UniProtKB-UniRule"/>
</dbReference>
<dbReference type="GO" id="GO:0046872">
    <property type="term" value="F:metal ion binding"/>
    <property type="evidence" value="ECO:0007669"/>
    <property type="project" value="UniProtKB-KW"/>
</dbReference>
<dbReference type="GO" id="GO:0050992">
    <property type="term" value="P:dimethylallyl diphosphate biosynthetic process"/>
    <property type="evidence" value="ECO:0007669"/>
    <property type="project" value="UniProtKB-UniRule"/>
</dbReference>
<dbReference type="GO" id="GO:0008299">
    <property type="term" value="P:isoprenoid biosynthetic process"/>
    <property type="evidence" value="ECO:0007669"/>
    <property type="project" value="UniProtKB-KW"/>
</dbReference>
<dbReference type="CDD" id="cd02885">
    <property type="entry name" value="NUDIX_IPP_Isomerase"/>
    <property type="match status" value="1"/>
</dbReference>
<dbReference type="FunFam" id="3.90.79.10:FF:000009">
    <property type="entry name" value="Isopentenyl-diphosphate Delta-isomerase"/>
    <property type="match status" value="1"/>
</dbReference>
<dbReference type="Gene3D" id="3.90.79.10">
    <property type="entry name" value="Nucleoside Triphosphate Pyrophosphohydrolase"/>
    <property type="match status" value="1"/>
</dbReference>
<dbReference type="HAMAP" id="MF_00202">
    <property type="entry name" value="Idi"/>
    <property type="match status" value="1"/>
</dbReference>
<dbReference type="InterPro" id="IPR056375">
    <property type="entry name" value="Idi_bact"/>
</dbReference>
<dbReference type="InterPro" id="IPR011876">
    <property type="entry name" value="IsopentenylPP_isomerase_typ1"/>
</dbReference>
<dbReference type="InterPro" id="IPR015797">
    <property type="entry name" value="NUDIX_hydrolase-like_dom_sf"/>
</dbReference>
<dbReference type="InterPro" id="IPR000086">
    <property type="entry name" value="NUDIX_hydrolase_dom"/>
</dbReference>
<dbReference type="NCBIfam" id="TIGR02150">
    <property type="entry name" value="IPP_isom_1"/>
    <property type="match status" value="1"/>
</dbReference>
<dbReference type="NCBIfam" id="NF002995">
    <property type="entry name" value="PRK03759.1"/>
    <property type="match status" value="1"/>
</dbReference>
<dbReference type="PANTHER" id="PTHR10885">
    <property type="entry name" value="ISOPENTENYL-DIPHOSPHATE DELTA-ISOMERASE"/>
    <property type="match status" value="1"/>
</dbReference>
<dbReference type="PANTHER" id="PTHR10885:SF0">
    <property type="entry name" value="ISOPENTENYL-DIPHOSPHATE DELTA-ISOMERASE"/>
    <property type="match status" value="1"/>
</dbReference>
<dbReference type="Pfam" id="PF00293">
    <property type="entry name" value="NUDIX"/>
    <property type="match status" value="1"/>
</dbReference>
<dbReference type="PIRSF" id="PIRSF018427">
    <property type="entry name" value="Isopntndiph_ism"/>
    <property type="match status" value="1"/>
</dbReference>
<dbReference type="SUPFAM" id="SSF55811">
    <property type="entry name" value="Nudix"/>
    <property type="match status" value="1"/>
</dbReference>
<dbReference type="PROSITE" id="PS51462">
    <property type="entry name" value="NUDIX"/>
    <property type="match status" value="1"/>
</dbReference>